<protein>
    <recommendedName>
        <fullName evidence="1">Ribosomal protein uS12 methylthiotransferase RimO</fullName>
        <shortName evidence="1">uS12 MTTase</shortName>
        <shortName evidence="1">uS12 methylthiotransferase</shortName>
        <ecNumber evidence="1">2.8.4.4</ecNumber>
    </recommendedName>
    <alternativeName>
        <fullName evidence="1">Ribosomal protein uS12 (aspartate-C(3))-methylthiotransferase</fullName>
    </alternativeName>
    <alternativeName>
        <fullName evidence="1">Ribosome maturation factor RimO</fullName>
    </alternativeName>
</protein>
<name>RIMO_PSYCK</name>
<evidence type="ECO:0000255" key="1">
    <source>
        <dbReference type="HAMAP-Rule" id="MF_01865"/>
    </source>
</evidence>
<evidence type="ECO:0000255" key="2">
    <source>
        <dbReference type="PROSITE-ProRule" id="PRU01266"/>
    </source>
</evidence>
<evidence type="ECO:0000256" key="3">
    <source>
        <dbReference type="SAM" id="MobiDB-lite"/>
    </source>
</evidence>
<organism>
    <name type="scientific">Psychrobacter cryohalolentis (strain ATCC BAA-1226 / DSM 17306 / VKM B-2378 / K5)</name>
    <dbReference type="NCBI Taxonomy" id="335284"/>
    <lineage>
        <taxon>Bacteria</taxon>
        <taxon>Pseudomonadati</taxon>
        <taxon>Pseudomonadota</taxon>
        <taxon>Gammaproteobacteria</taxon>
        <taxon>Moraxellales</taxon>
        <taxon>Moraxellaceae</taxon>
        <taxon>Psychrobacter</taxon>
    </lineage>
</organism>
<reference key="1">
    <citation type="submission" date="2006-03" db="EMBL/GenBank/DDBJ databases">
        <title>Complete sequence of chromosome of Psychrobacter cryohalolentis K5.</title>
        <authorList>
            <consortium name="US DOE Joint Genome Institute"/>
            <person name="Copeland A."/>
            <person name="Lucas S."/>
            <person name="Lapidus A."/>
            <person name="Barry K."/>
            <person name="Detter J.C."/>
            <person name="Glavina T."/>
            <person name="Hammon N."/>
            <person name="Israni S."/>
            <person name="Dalin E."/>
            <person name="Tice H."/>
            <person name="Pitluck S."/>
            <person name="Brettin T."/>
            <person name="Bruce D."/>
            <person name="Han C."/>
            <person name="Tapia R."/>
            <person name="Sims D.R."/>
            <person name="Gilna P."/>
            <person name="Schmutz J."/>
            <person name="Larimer F."/>
            <person name="Land M."/>
            <person name="Hauser L."/>
            <person name="Kyrpides N."/>
            <person name="Kim E."/>
            <person name="Richardson P."/>
        </authorList>
    </citation>
    <scope>NUCLEOTIDE SEQUENCE [LARGE SCALE GENOMIC DNA]</scope>
    <source>
        <strain>ATCC BAA-1226 / DSM 17306 / VKM B-2378 / K5</strain>
    </source>
</reference>
<dbReference type="EC" id="2.8.4.4" evidence="1"/>
<dbReference type="EMBL" id="CP000323">
    <property type="protein sequence ID" value="ABE75492.1"/>
    <property type="molecule type" value="Genomic_DNA"/>
</dbReference>
<dbReference type="RefSeq" id="WP_011514040.1">
    <property type="nucleotide sequence ID" value="NC_007969.1"/>
</dbReference>
<dbReference type="SMR" id="Q1QA11"/>
<dbReference type="STRING" id="335284.Pcryo_1715"/>
<dbReference type="KEGG" id="pcr:Pcryo_1715"/>
<dbReference type="eggNOG" id="COG0621">
    <property type="taxonomic scope" value="Bacteria"/>
</dbReference>
<dbReference type="HOGENOM" id="CLU_018697_0_0_6"/>
<dbReference type="Proteomes" id="UP000002425">
    <property type="component" value="Chromosome"/>
</dbReference>
<dbReference type="GO" id="GO:0005829">
    <property type="term" value="C:cytosol"/>
    <property type="evidence" value="ECO:0007669"/>
    <property type="project" value="TreeGrafter"/>
</dbReference>
<dbReference type="GO" id="GO:0051539">
    <property type="term" value="F:4 iron, 4 sulfur cluster binding"/>
    <property type="evidence" value="ECO:0007669"/>
    <property type="project" value="UniProtKB-UniRule"/>
</dbReference>
<dbReference type="GO" id="GO:0035599">
    <property type="term" value="F:aspartic acid methylthiotransferase activity"/>
    <property type="evidence" value="ECO:0007669"/>
    <property type="project" value="TreeGrafter"/>
</dbReference>
<dbReference type="GO" id="GO:0046872">
    <property type="term" value="F:metal ion binding"/>
    <property type="evidence" value="ECO:0007669"/>
    <property type="project" value="UniProtKB-KW"/>
</dbReference>
<dbReference type="GO" id="GO:0103039">
    <property type="term" value="F:protein methylthiotransferase activity"/>
    <property type="evidence" value="ECO:0007669"/>
    <property type="project" value="UniProtKB-EC"/>
</dbReference>
<dbReference type="GO" id="GO:0006400">
    <property type="term" value="P:tRNA modification"/>
    <property type="evidence" value="ECO:0007669"/>
    <property type="project" value="InterPro"/>
</dbReference>
<dbReference type="CDD" id="cd01335">
    <property type="entry name" value="Radical_SAM"/>
    <property type="match status" value="1"/>
</dbReference>
<dbReference type="FunFam" id="3.40.50.12160:FF:000002">
    <property type="entry name" value="Ribosomal protein S12 methylthiotransferase RimO"/>
    <property type="match status" value="1"/>
</dbReference>
<dbReference type="FunFam" id="3.80.30.20:FF:000001">
    <property type="entry name" value="tRNA-2-methylthio-N(6)-dimethylallyladenosine synthase 2"/>
    <property type="match status" value="1"/>
</dbReference>
<dbReference type="Gene3D" id="3.40.50.12160">
    <property type="entry name" value="Methylthiotransferase, N-terminal domain"/>
    <property type="match status" value="1"/>
</dbReference>
<dbReference type="Gene3D" id="2.40.50.140">
    <property type="entry name" value="Nucleic acid-binding proteins"/>
    <property type="match status" value="1"/>
</dbReference>
<dbReference type="Gene3D" id="3.80.30.20">
    <property type="entry name" value="tm_1862 like domain"/>
    <property type="match status" value="1"/>
</dbReference>
<dbReference type="HAMAP" id="MF_01865">
    <property type="entry name" value="MTTase_RimO"/>
    <property type="match status" value="1"/>
</dbReference>
<dbReference type="InterPro" id="IPR006638">
    <property type="entry name" value="Elp3/MiaA/NifB-like_rSAM"/>
</dbReference>
<dbReference type="InterPro" id="IPR005839">
    <property type="entry name" value="Methylthiotransferase"/>
</dbReference>
<dbReference type="InterPro" id="IPR020612">
    <property type="entry name" value="Methylthiotransferase_CS"/>
</dbReference>
<dbReference type="InterPro" id="IPR013848">
    <property type="entry name" value="Methylthiotransferase_N"/>
</dbReference>
<dbReference type="InterPro" id="IPR038135">
    <property type="entry name" value="Methylthiotransferase_N_sf"/>
</dbReference>
<dbReference type="InterPro" id="IPR012340">
    <property type="entry name" value="NA-bd_OB-fold"/>
</dbReference>
<dbReference type="InterPro" id="IPR005840">
    <property type="entry name" value="Ribosomal_uS12_MeSTrfase_RimO"/>
</dbReference>
<dbReference type="InterPro" id="IPR007197">
    <property type="entry name" value="rSAM"/>
</dbReference>
<dbReference type="InterPro" id="IPR023404">
    <property type="entry name" value="rSAM_horseshoe"/>
</dbReference>
<dbReference type="InterPro" id="IPR002792">
    <property type="entry name" value="TRAM_dom"/>
</dbReference>
<dbReference type="NCBIfam" id="TIGR01125">
    <property type="entry name" value="30S ribosomal protein S12 methylthiotransferase RimO"/>
    <property type="match status" value="1"/>
</dbReference>
<dbReference type="NCBIfam" id="TIGR00089">
    <property type="entry name" value="MiaB/RimO family radical SAM methylthiotransferase"/>
    <property type="match status" value="1"/>
</dbReference>
<dbReference type="PANTHER" id="PTHR43837">
    <property type="entry name" value="RIBOSOMAL PROTEIN S12 METHYLTHIOTRANSFERASE RIMO"/>
    <property type="match status" value="1"/>
</dbReference>
<dbReference type="PANTHER" id="PTHR43837:SF1">
    <property type="entry name" value="RIBOSOMAL PROTEIN US12 METHYLTHIOTRANSFERASE RIMO"/>
    <property type="match status" value="1"/>
</dbReference>
<dbReference type="Pfam" id="PF04055">
    <property type="entry name" value="Radical_SAM"/>
    <property type="match status" value="1"/>
</dbReference>
<dbReference type="Pfam" id="PF18693">
    <property type="entry name" value="TRAM_2"/>
    <property type="match status" value="1"/>
</dbReference>
<dbReference type="Pfam" id="PF00919">
    <property type="entry name" value="UPF0004"/>
    <property type="match status" value="1"/>
</dbReference>
<dbReference type="SFLD" id="SFLDG01082">
    <property type="entry name" value="B12-binding_domain_containing"/>
    <property type="match status" value="1"/>
</dbReference>
<dbReference type="SFLD" id="SFLDG01061">
    <property type="entry name" value="methylthiotransferase"/>
    <property type="match status" value="1"/>
</dbReference>
<dbReference type="SFLD" id="SFLDF00274">
    <property type="entry name" value="ribosomal_protein_S12_methylth"/>
    <property type="match status" value="1"/>
</dbReference>
<dbReference type="SMART" id="SM00729">
    <property type="entry name" value="Elp3"/>
    <property type="match status" value="1"/>
</dbReference>
<dbReference type="SUPFAM" id="SSF102114">
    <property type="entry name" value="Radical SAM enzymes"/>
    <property type="match status" value="1"/>
</dbReference>
<dbReference type="PROSITE" id="PS51449">
    <property type="entry name" value="MTTASE_N"/>
    <property type="match status" value="1"/>
</dbReference>
<dbReference type="PROSITE" id="PS01278">
    <property type="entry name" value="MTTASE_RADICAL"/>
    <property type="match status" value="1"/>
</dbReference>
<dbReference type="PROSITE" id="PS51918">
    <property type="entry name" value="RADICAL_SAM"/>
    <property type="match status" value="1"/>
</dbReference>
<dbReference type="PROSITE" id="PS50926">
    <property type="entry name" value="TRAM"/>
    <property type="match status" value="1"/>
</dbReference>
<gene>
    <name evidence="1" type="primary">rimO</name>
    <name type="ordered locus">Pcryo_1715</name>
</gene>
<keyword id="KW-0004">4Fe-4S</keyword>
<keyword id="KW-0963">Cytoplasm</keyword>
<keyword id="KW-0408">Iron</keyword>
<keyword id="KW-0411">Iron-sulfur</keyword>
<keyword id="KW-0479">Metal-binding</keyword>
<keyword id="KW-0949">S-adenosyl-L-methionine</keyword>
<keyword id="KW-0808">Transferase</keyword>
<proteinExistence type="inferred from homology"/>
<accession>Q1QA11</accession>
<sequence length="531" mass="58414">MPNISTESVNTTIAPSQPASIPKDTATLFNPAKPTAMPAQSSTDSVQPYHHKANHNQNRSVEQSSEVVSAASAKTTTATTNAPVNAAPKIGFVSLGCPKALVDSERIITELSRDGYQVASDYEGADLVVVNTCGFIESAVQESLDAIGEAISKNGKVIVTGCLGKEADKIREMHPAVLAVTGAHAYDDVIRAVALHVPKPDCGLDASYDPKIDLINEAGIKLTPSHYAYLKISEGCNHRCTFCIIPSLRGDLVSRPIDSVMNEALALKKAGVKELLIISQDTSAYGLDLKYKTSFWNGMPLKSKFYDLCQALNDLGIWVRLHYVYPYPHVDKVVELMGEKKLLPYLDIPFQHASHRILKAMKRPAHSENTLARIHAWREICPDIVIRSTFVVGFPGETEEDFQCLLDWLVEARLDRVGAFTYSEVEGAVANDLPNHVPEDVKQERYERLMTLQQDISAQKLQEKIGKTLMVLVDEIDREEGVAICRSYADAPEIDGHVYVDDIDAHVKVGQFLTVTIDDASEYDLFASYKG</sequence>
<comment type="function">
    <text evidence="1">Catalyzes the methylthiolation of an aspartic acid residue of ribosomal protein uS12.</text>
</comment>
<comment type="catalytic activity">
    <reaction evidence="1">
        <text>L-aspartate(89)-[ribosomal protein uS12]-hydrogen + (sulfur carrier)-SH + AH2 + 2 S-adenosyl-L-methionine = 3-methylsulfanyl-L-aspartate(89)-[ribosomal protein uS12]-hydrogen + (sulfur carrier)-H + 5'-deoxyadenosine + L-methionine + A + S-adenosyl-L-homocysteine + 2 H(+)</text>
        <dbReference type="Rhea" id="RHEA:37087"/>
        <dbReference type="Rhea" id="RHEA-COMP:10460"/>
        <dbReference type="Rhea" id="RHEA-COMP:10461"/>
        <dbReference type="Rhea" id="RHEA-COMP:14737"/>
        <dbReference type="Rhea" id="RHEA-COMP:14739"/>
        <dbReference type="ChEBI" id="CHEBI:13193"/>
        <dbReference type="ChEBI" id="CHEBI:15378"/>
        <dbReference type="ChEBI" id="CHEBI:17319"/>
        <dbReference type="ChEBI" id="CHEBI:17499"/>
        <dbReference type="ChEBI" id="CHEBI:29917"/>
        <dbReference type="ChEBI" id="CHEBI:29961"/>
        <dbReference type="ChEBI" id="CHEBI:57844"/>
        <dbReference type="ChEBI" id="CHEBI:57856"/>
        <dbReference type="ChEBI" id="CHEBI:59789"/>
        <dbReference type="ChEBI" id="CHEBI:64428"/>
        <dbReference type="ChEBI" id="CHEBI:73599"/>
        <dbReference type="EC" id="2.8.4.4"/>
    </reaction>
</comment>
<comment type="cofactor">
    <cofactor evidence="1">
        <name>[4Fe-4S] cluster</name>
        <dbReference type="ChEBI" id="CHEBI:49883"/>
    </cofactor>
    <text evidence="1">Binds 2 [4Fe-4S] clusters. One cluster is coordinated with 3 cysteines and an exchangeable S-adenosyl-L-methionine.</text>
</comment>
<comment type="subcellular location">
    <subcellularLocation>
        <location evidence="1">Cytoplasm</location>
    </subcellularLocation>
</comment>
<comment type="similarity">
    <text evidence="1">Belongs to the methylthiotransferase family. RimO subfamily.</text>
</comment>
<feature type="chain" id="PRO_0000374957" description="Ribosomal protein uS12 methylthiotransferase RimO">
    <location>
        <begin position="1"/>
        <end position="531"/>
    </location>
</feature>
<feature type="domain" description="MTTase N-terminal" evidence="1">
    <location>
        <begin position="88"/>
        <end position="198"/>
    </location>
</feature>
<feature type="domain" description="Radical SAM core" evidence="2">
    <location>
        <begin position="222"/>
        <end position="459"/>
    </location>
</feature>
<feature type="domain" description="TRAM" evidence="1">
    <location>
        <begin position="462"/>
        <end position="531"/>
    </location>
</feature>
<feature type="region of interest" description="Disordered" evidence="3">
    <location>
        <begin position="1"/>
        <end position="77"/>
    </location>
</feature>
<feature type="compositionally biased region" description="Polar residues" evidence="3">
    <location>
        <begin position="1"/>
        <end position="19"/>
    </location>
</feature>
<feature type="compositionally biased region" description="Polar residues" evidence="3">
    <location>
        <begin position="55"/>
        <end position="67"/>
    </location>
</feature>
<feature type="compositionally biased region" description="Low complexity" evidence="3">
    <location>
        <begin position="68"/>
        <end position="77"/>
    </location>
</feature>
<feature type="binding site" evidence="1">
    <location>
        <position position="97"/>
    </location>
    <ligand>
        <name>[4Fe-4S] cluster</name>
        <dbReference type="ChEBI" id="CHEBI:49883"/>
        <label>1</label>
    </ligand>
</feature>
<feature type="binding site" evidence="1">
    <location>
        <position position="133"/>
    </location>
    <ligand>
        <name>[4Fe-4S] cluster</name>
        <dbReference type="ChEBI" id="CHEBI:49883"/>
        <label>1</label>
    </ligand>
</feature>
<feature type="binding site" evidence="1">
    <location>
        <position position="162"/>
    </location>
    <ligand>
        <name>[4Fe-4S] cluster</name>
        <dbReference type="ChEBI" id="CHEBI:49883"/>
        <label>1</label>
    </ligand>
</feature>
<feature type="binding site" evidence="1">
    <location>
        <position position="236"/>
    </location>
    <ligand>
        <name>[4Fe-4S] cluster</name>
        <dbReference type="ChEBI" id="CHEBI:49883"/>
        <label>2</label>
        <note>4Fe-4S-S-AdoMet</note>
    </ligand>
</feature>
<feature type="binding site" evidence="1">
    <location>
        <position position="240"/>
    </location>
    <ligand>
        <name>[4Fe-4S] cluster</name>
        <dbReference type="ChEBI" id="CHEBI:49883"/>
        <label>2</label>
        <note>4Fe-4S-S-AdoMet</note>
    </ligand>
</feature>
<feature type="binding site" evidence="1">
    <location>
        <position position="243"/>
    </location>
    <ligand>
        <name>[4Fe-4S] cluster</name>
        <dbReference type="ChEBI" id="CHEBI:49883"/>
        <label>2</label>
        <note>4Fe-4S-S-AdoMet</note>
    </ligand>
</feature>